<comment type="function">
    <text evidence="1">Located at the top of the head of the 30S subunit, it contacts several helices of the 16S rRNA. In the 70S ribosome it contacts the 23S rRNA (bridge B1a) and protein L5 of the 50S subunit (bridge B1b), connecting the 2 subunits; these bridges are implicated in subunit movement. Contacts the tRNAs in the A and P-sites.</text>
</comment>
<comment type="subunit">
    <text evidence="1">Part of the 30S ribosomal subunit. Forms a loose heterodimer with protein S19. Forms two bridges to the 50S subunit in the 70S ribosome.</text>
</comment>
<comment type="similarity">
    <text evidence="1">Belongs to the universal ribosomal protein uS13 family.</text>
</comment>
<protein>
    <recommendedName>
        <fullName evidence="1">Small ribosomal subunit protein uS13</fullName>
    </recommendedName>
    <alternativeName>
        <fullName evidence="3">30S ribosomal protein S13</fullName>
    </alternativeName>
</protein>
<proteinExistence type="inferred from homology"/>
<evidence type="ECO:0000255" key="1">
    <source>
        <dbReference type="HAMAP-Rule" id="MF_01315"/>
    </source>
</evidence>
<evidence type="ECO:0000256" key="2">
    <source>
        <dbReference type="SAM" id="MobiDB-lite"/>
    </source>
</evidence>
<evidence type="ECO:0000305" key="3"/>
<reference key="1">
    <citation type="journal article" date="1995" name="Science">
        <title>The minimal gene complement of Mycoplasma genitalium.</title>
        <authorList>
            <person name="Fraser C.M."/>
            <person name="Gocayne J.D."/>
            <person name="White O."/>
            <person name="Adams M.D."/>
            <person name="Clayton R.A."/>
            <person name="Fleischmann R.D."/>
            <person name="Bult C.J."/>
            <person name="Kerlavage A.R."/>
            <person name="Sutton G.G."/>
            <person name="Kelley J.M."/>
            <person name="Fritchman J.L."/>
            <person name="Weidman J.F."/>
            <person name="Small K.V."/>
            <person name="Sandusky M."/>
            <person name="Fuhrmann J.L."/>
            <person name="Nguyen D.T."/>
            <person name="Utterback T.R."/>
            <person name="Saudek D.M."/>
            <person name="Phillips C.A."/>
            <person name="Merrick J.M."/>
            <person name="Tomb J.-F."/>
            <person name="Dougherty B.A."/>
            <person name="Bott K.F."/>
            <person name="Hu P.-C."/>
            <person name="Lucier T.S."/>
            <person name="Peterson S.N."/>
            <person name="Smith H.O."/>
            <person name="Hutchison C.A. III"/>
            <person name="Venter J.C."/>
        </authorList>
    </citation>
    <scope>NUCLEOTIDE SEQUENCE [LARGE SCALE GENOMIC DNA]</scope>
    <source>
        <strain>ATCC 33530 / DSM 19775 / NCTC 10195 / G37</strain>
    </source>
</reference>
<reference key="2">
    <citation type="journal article" date="1993" name="J. Bacteriol.">
        <title>A survey of the Mycoplasma genitalium genome by using random sequencing.</title>
        <authorList>
            <person name="Peterson S.N."/>
            <person name="Hu P.-C."/>
            <person name="Bott K.F."/>
            <person name="Hutchison C.A. III"/>
        </authorList>
    </citation>
    <scope>NUCLEOTIDE SEQUENCE [GENOMIC DNA] OF 7-123</scope>
    <source>
        <strain>ATCC 33530 / DSM 19775 / NCTC 10195 / G37</strain>
    </source>
</reference>
<keyword id="KW-1185">Reference proteome</keyword>
<keyword id="KW-0687">Ribonucleoprotein</keyword>
<keyword id="KW-0689">Ribosomal protein</keyword>
<keyword id="KW-0694">RNA-binding</keyword>
<keyword id="KW-0699">rRNA-binding</keyword>
<keyword id="KW-0820">tRNA-binding</keyword>
<sequence>MARILGIDIPNQKRIEIALTYIFGIGLSSAKTILKKAKINPDKRVKDLSEEELVAIRNAASGYKIEGDLRREIALNIKHLTEIGSWKGIRHRKNLPVRGQRTRTNARTRKGPRKTVANKKIESK</sequence>
<accession>P47421</accession>
<feature type="chain" id="PRO_0000132108" description="Small ribosomal subunit protein uS13">
    <location>
        <begin position="1"/>
        <end position="124"/>
    </location>
</feature>
<feature type="region of interest" description="Disordered" evidence="2">
    <location>
        <begin position="93"/>
        <end position="124"/>
    </location>
</feature>
<feature type="compositionally biased region" description="Basic residues" evidence="2">
    <location>
        <begin position="93"/>
        <end position="117"/>
    </location>
</feature>
<name>RS13_MYCGE</name>
<gene>
    <name evidence="1" type="primary">rpsM</name>
    <name evidence="1" type="synonym">rps13</name>
    <name type="ordered locus">MG175</name>
</gene>
<organism>
    <name type="scientific">Mycoplasma genitalium (strain ATCC 33530 / DSM 19775 / NCTC 10195 / G37)</name>
    <name type="common">Mycoplasmoides genitalium</name>
    <dbReference type="NCBI Taxonomy" id="243273"/>
    <lineage>
        <taxon>Bacteria</taxon>
        <taxon>Bacillati</taxon>
        <taxon>Mycoplasmatota</taxon>
        <taxon>Mycoplasmoidales</taxon>
        <taxon>Mycoplasmoidaceae</taxon>
        <taxon>Mycoplasmoides</taxon>
    </lineage>
</organism>
<dbReference type="EMBL" id="L43967">
    <property type="protein sequence ID" value="AAC71394.1"/>
    <property type="molecule type" value="Genomic_DNA"/>
</dbReference>
<dbReference type="EMBL" id="U01733">
    <property type="protein sequence ID" value="AAD10542.1"/>
    <property type="molecule type" value="Genomic_DNA"/>
</dbReference>
<dbReference type="PIR" id="D64219">
    <property type="entry name" value="D64219"/>
</dbReference>
<dbReference type="RefSeq" id="WP_009885860.1">
    <property type="nucleotide sequence ID" value="NC_000908.2"/>
</dbReference>
<dbReference type="SMR" id="P47421"/>
<dbReference type="FunCoup" id="P47421">
    <property type="interactions" value="217"/>
</dbReference>
<dbReference type="STRING" id="243273.MG_175"/>
<dbReference type="GeneID" id="88282307"/>
<dbReference type="KEGG" id="mge:MG_175"/>
<dbReference type="eggNOG" id="COG0099">
    <property type="taxonomic scope" value="Bacteria"/>
</dbReference>
<dbReference type="HOGENOM" id="CLU_103849_1_2_14"/>
<dbReference type="InParanoid" id="P47421"/>
<dbReference type="OrthoDB" id="9803610at2"/>
<dbReference type="BioCyc" id="MGEN243273:G1GJ2-199-MONOMER"/>
<dbReference type="Proteomes" id="UP000000807">
    <property type="component" value="Chromosome"/>
</dbReference>
<dbReference type="GO" id="GO:0005829">
    <property type="term" value="C:cytosol"/>
    <property type="evidence" value="ECO:0000318"/>
    <property type="project" value="GO_Central"/>
</dbReference>
<dbReference type="GO" id="GO:0015935">
    <property type="term" value="C:small ribosomal subunit"/>
    <property type="evidence" value="ECO:0000318"/>
    <property type="project" value="GO_Central"/>
</dbReference>
<dbReference type="GO" id="GO:0019843">
    <property type="term" value="F:rRNA binding"/>
    <property type="evidence" value="ECO:0007669"/>
    <property type="project" value="UniProtKB-UniRule"/>
</dbReference>
<dbReference type="GO" id="GO:0003735">
    <property type="term" value="F:structural constituent of ribosome"/>
    <property type="evidence" value="ECO:0007669"/>
    <property type="project" value="InterPro"/>
</dbReference>
<dbReference type="GO" id="GO:0000049">
    <property type="term" value="F:tRNA binding"/>
    <property type="evidence" value="ECO:0007669"/>
    <property type="project" value="UniProtKB-UniRule"/>
</dbReference>
<dbReference type="GO" id="GO:0006412">
    <property type="term" value="P:translation"/>
    <property type="evidence" value="ECO:0007669"/>
    <property type="project" value="UniProtKB-UniRule"/>
</dbReference>
<dbReference type="FunFam" id="1.10.8.50:FF:000001">
    <property type="entry name" value="30S ribosomal protein S13"/>
    <property type="match status" value="1"/>
</dbReference>
<dbReference type="FunFam" id="4.10.910.10:FF:000001">
    <property type="entry name" value="30S ribosomal protein S13"/>
    <property type="match status" value="1"/>
</dbReference>
<dbReference type="Gene3D" id="1.10.8.50">
    <property type="match status" value="1"/>
</dbReference>
<dbReference type="Gene3D" id="4.10.910.10">
    <property type="entry name" value="30s ribosomal protein s13, domain 2"/>
    <property type="match status" value="1"/>
</dbReference>
<dbReference type="HAMAP" id="MF_01315">
    <property type="entry name" value="Ribosomal_uS13"/>
    <property type="match status" value="1"/>
</dbReference>
<dbReference type="InterPro" id="IPR027437">
    <property type="entry name" value="Rbsml_uS13_C"/>
</dbReference>
<dbReference type="InterPro" id="IPR001892">
    <property type="entry name" value="Ribosomal_uS13"/>
</dbReference>
<dbReference type="InterPro" id="IPR010979">
    <property type="entry name" value="Ribosomal_uS13-like_H2TH"/>
</dbReference>
<dbReference type="InterPro" id="IPR019980">
    <property type="entry name" value="Ribosomal_uS13_bac-type"/>
</dbReference>
<dbReference type="InterPro" id="IPR018269">
    <property type="entry name" value="Ribosomal_uS13_CS"/>
</dbReference>
<dbReference type="NCBIfam" id="TIGR03631">
    <property type="entry name" value="uS13_bact"/>
    <property type="match status" value="1"/>
</dbReference>
<dbReference type="PANTHER" id="PTHR10871">
    <property type="entry name" value="30S RIBOSOMAL PROTEIN S13/40S RIBOSOMAL PROTEIN S18"/>
    <property type="match status" value="1"/>
</dbReference>
<dbReference type="PANTHER" id="PTHR10871:SF1">
    <property type="entry name" value="SMALL RIBOSOMAL SUBUNIT PROTEIN US13M"/>
    <property type="match status" value="1"/>
</dbReference>
<dbReference type="Pfam" id="PF00416">
    <property type="entry name" value="Ribosomal_S13"/>
    <property type="match status" value="1"/>
</dbReference>
<dbReference type="PIRSF" id="PIRSF002134">
    <property type="entry name" value="Ribosomal_S13"/>
    <property type="match status" value="1"/>
</dbReference>
<dbReference type="SUPFAM" id="SSF46946">
    <property type="entry name" value="S13-like H2TH domain"/>
    <property type="match status" value="1"/>
</dbReference>
<dbReference type="PROSITE" id="PS00646">
    <property type="entry name" value="RIBOSOMAL_S13_1"/>
    <property type="match status" value="1"/>
</dbReference>
<dbReference type="PROSITE" id="PS50159">
    <property type="entry name" value="RIBOSOMAL_S13_2"/>
    <property type="match status" value="1"/>
</dbReference>